<reference key="1">
    <citation type="submission" date="2006-08" db="EMBL/GenBank/DDBJ databases">
        <title>Complete sequence of Alkalilimnicola ehrilichei MLHE-1.</title>
        <authorList>
            <person name="Copeland A."/>
            <person name="Lucas S."/>
            <person name="Lapidus A."/>
            <person name="Barry K."/>
            <person name="Detter J.C."/>
            <person name="Glavina del Rio T."/>
            <person name="Hammon N."/>
            <person name="Israni S."/>
            <person name="Dalin E."/>
            <person name="Tice H."/>
            <person name="Pitluck S."/>
            <person name="Sims D."/>
            <person name="Brettin T."/>
            <person name="Bruce D."/>
            <person name="Han C."/>
            <person name="Tapia R."/>
            <person name="Gilna P."/>
            <person name="Schmutz J."/>
            <person name="Larimer F."/>
            <person name="Land M."/>
            <person name="Hauser L."/>
            <person name="Kyrpides N."/>
            <person name="Mikhailova N."/>
            <person name="Oremland R.S."/>
            <person name="Hoeft S.E."/>
            <person name="Switzer-Blum J."/>
            <person name="Kulp T."/>
            <person name="King G."/>
            <person name="Tabita R."/>
            <person name="Witte B."/>
            <person name="Santini J.M."/>
            <person name="Basu P."/>
            <person name="Hollibaugh J.T."/>
            <person name="Xie G."/>
            <person name="Stolz J.F."/>
            <person name="Richardson P."/>
        </authorList>
    </citation>
    <scope>NUCLEOTIDE SEQUENCE [LARGE SCALE GENOMIC DNA]</scope>
    <source>
        <strain>ATCC BAA-1101 / DSM 17681 / MLHE-1</strain>
    </source>
</reference>
<name>GRPE_ALKEH</name>
<proteinExistence type="inferred from homology"/>
<feature type="chain" id="PRO_1000053535" description="Protein GrpE">
    <location>
        <begin position="1"/>
        <end position="218"/>
    </location>
</feature>
<feature type="region of interest" description="Disordered" evidence="2">
    <location>
        <begin position="1"/>
        <end position="66"/>
    </location>
</feature>
<feature type="compositionally biased region" description="Basic and acidic residues" evidence="2">
    <location>
        <begin position="1"/>
        <end position="21"/>
    </location>
</feature>
<feature type="compositionally biased region" description="Low complexity" evidence="2">
    <location>
        <begin position="24"/>
        <end position="36"/>
    </location>
</feature>
<dbReference type="EMBL" id="CP000453">
    <property type="protein sequence ID" value="ABI57245.1"/>
    <property type="molecule type" value="Genomic_DNA"/>
</dbReference>
<dbReference type="RefSeq" id="WP_011629639.1">
    <property type="nucleotide sequence ID" value="NC_008340.1"/>
</dbReference>
<dbReference type="SMR" id="Q0A7E2"/>
<dbReference type="KEGG" id="aeh:Mlg_1901"/>
<dbReference type="eggNOG" id="COG0576">
    <property type="taxonomic scope" value="Bacteria"/>
</dbReference>
<dbReference type="HOGENOM" id="CLU_057217_6_0_6"/>
<dbReference type="OrthoDB" id="9789811at2"/>
<dbReference type="Proteomes" id="UP000001962">
    <property type="component" value="Chromosome"/>
</dbReference>
<dbReference type="GO" id="GO:0005829">
    <property type="term" value="C:cytosol"/>
    <property type="evidence" value="ECO:0007669"/>
    <property type="project" value="TreeGrafter"/>
</dbReference>
<dbReference type="GO" id="GO:0000774">
    <property type="term" value="F:adenyl-nucleotide exchange factor activity"/>
    <property type="evidence" value="ECO:0007669"/>
    <property type="project" value="InterPro"/>
</dbReference>
<dbReference type="GO" id="GO:0042803">
    <property type="term" value="F:protein homodimerization activity"/>
    <property type="evidence" value="ECO:0007669"/>
    <property type="project" value="InterPro"/>
</dbReference>
<dbReference type="GO" id="GO:0051087">
    <property type="term" value="F:protein-folding chaperone binding"/>
    <property type="evidence" value="ECO:0007669"/>
    <property type="project" value="InterPro"/>
</dbReference>
<dbReference type="GO" id="GO:0051082">
    <property type="term" value="F:unfolded protein binding"/>
    <property type="evidence" value="ECO:0007669"/>
    <property type="project" value="TreeGrafter"/>
</dbReference>
<dbReference type="GO" id="GO:0006457">
    <property type="term" value="P:protein folding"/>
    <property type="evidence" value="ECO:0007669"/>
    <property type="project" value="InterPro"/>
</dbReference>
<dbReference type="CDD" id="cd00446">
    <property type="entry name" value="GrpE"/>
    <property type="match status" value="1"/>
</dbReference>
<dbReference type="FunFam" id="2.30.22.10:FF:000001">
    <property type="entry name" value="Protein GrpE"/>
    <property type="match status" value="1"/>
</dbReference>
<dbReference type="Gene3D" id="3.90.20.20">
    <property type="match status" value="1"/>
</dbReference>
<dbReference type="Gene3D" id="2.30.22.10">
    <property type="entry name" value="Head domain of nucleotide exchange factor GrpE"/>
    <property type="match status" value="1"/>
</dbReference>
<dbReference type="HAMAP" id="MF_01151">
    <property type="entry name" value="GrpE"/>
    <property type="match status" value="1"/>
</dbReference>
<dbReference type="InterPro" id="IPR000740">
    <property type="entry name" value="GrpE"/>
</dbReference>
<dbReference type="InterPro" id="IPR013805">
    <property type="entry name" value="GrpE_coiled_coil"/>
</dbReference>
<dbReference type="InterPro" id="IPR009012">
    <property type="entry name" value="GrpE_head"/>
</dbReference>
<dbReference type="NCBIfam" id="NF010737">
    <property type="entry name" value="PRK14139.1"/>
    <property type="match status" value="1"/>
</dbReference>
<dbReference type="NCBIfam" id="NF010738">
    <property type="entry name" value="PRK14140.1"/>
    <property type="match status" value="1"/>
</dbReference>
<dbReference type="NCBIfam" id="NF010748">
    <property type="entry name" value="PRK14150.1"/>
    <property type="match status" value="1"/>
</dbReference>
<dbReference type="PANTHER" id="PTHR21237">
    <property type="entry name" value="GRPE PROTEIN"/>
    <property type="match status" value="1"/>
</dbReference>
<dbReference type="PANTHER" id="PTHR21237:SF23">
    <property type="entry name" value="GRPE PROTEIN HOMOLOG, MITOCHONDRIAL"/>
    <property type="match status" value="1"/>
</dbReference>
<dbReference type="Pfam" id="PF01025">
    <property type="entry name" value="GrpE"/>
    <property type="match status" value="1"/>
</dbReference>
<dbReference type="PRINTS" id="PR00773">
    <property type="entry name" value="GRPEPROTEIN"/>
</dbReference>
<dbReference type="SUPFAM" id="SSF58014">
    <property type="entry name" value="Coiled-coil domain of nucleotide exchange factor GrpE"/>
    <property type="match status" value="1"/>
</dbReference>
<dbReference type="SUPFAM" id="SSF51064">
    <property type="entry name" value="Head domain of nucleotide exchange factor GrpE"/>
    <property type="match status" value="1"/>
</dbReference>
<dbReference type="PROSITE" id="PS01071">
    <property type="entry name" value="GRPE"/>
    <property type="match status" value="1"/>
</dbReference>
<keyword id="KW-0143">Chaperone</keyword>
<keyword id="KW-0963">Cytoplasm</keyword>
<keyword id="KW-1185">Reference proteome</keyword>
<keyword id="KW-0346">Stress response</keyword>
<comment type="function">
    <text evidence="1">Participates actively in the response to hyperosmotic and heat shock by preventing the aggregation of stress-denatured proteins, in association with DnaK and GrpE. It is the nucleotide exchange factor for DnaK and may function as a thermosensor. Unfolded proteins bind initially to DnaJ; upon interaction with the DnaJ-bound protein, DnaK hydrolyzes its bound ATP, resulting in the formation of a stable complex. GrpE releases ADP from DnaK; ATP binding to DnaK triggers the release of the substrate protein, thus completing the reaction cycle. Several rounds of ATP-dependent interactions between DnaJ, DnaK and GrpE are required for fully efficient folding.</text>
</comment>
<comment type="subunit">
    <text evidence="1">Homodimer.</text>
</comment>
<comment type="subcellular location">
    <subcellularLocation>
        <location evidence="1">Cytoplasm</location>
    </subcellularLocation>
</comment>
<comment type="similarity">
    <text evidence="1">Belongs to the GrpE family.</text>
</comment>
<gene>
    <name evidence="1" type="primary">grpE</name>
    <name type="ordered locus">Mlg_1901</name>
</gene>
<organism>
    <name type="scientific">Alkalilimnicola ehrlichii (strain ATCC BAA-1101 / DSM 17681 / MLHE-1)</name>
    <dbReference type="NCBI Taxonomy" id="187272"/>
    <lineage>
        <taxon>Bacteria</taxon>
        <taxon>Pseudomonadati</taxon>
        <taxon>Pseudomonadota</taxon>
        <taxon>Gammaproteobacteria</taxon>
        <taxon>Chromatiales</taxon>
        <taxon>Ectothiorhodospiraceae</taxon>
        <taxon>Alkalilimnicola</taxon>
    </lineage>
</organism>
<evidence type="ECO:0000255" key="1">
    <source>
        <dbReference type="HAMAP-Rule" id="MF_01151"/>
    </source>
</evidence>
<evidence type="ECO:0000256" key="2">
    <source>
        <dbReference type="SAM" id="MobiDB-lite"/>
    </source>
</evidence>
<sequence length="218" mass="23955">MSDKQREAERQQSEDKAHSEAESAEAGQAPEAQAAEDGAESASGDSGDELTELQQALEEARARAEENWNECLRARAEMQNIQRRAQADVEKARKYAVEKIAGDLLGVKDSLEMGVKAAKEEGADPQKLLEGSELTLKMLSQVLERFNVQEIDPQGERFNPEHHEAVAAQPSHEHEPNTVLNVMQKGYALHDRVLRPAMVVVSQKAPEPPPSGSIDEQA</sequence>
<protein>
    <recommendedName>
        <fullName evidence="1">Protein GrpE</fullName>
    </recommendedName>
    <alternativeName>
        <fullName evidence="1">HSP-70 cofactor</fullName>
    </alternativeName>
</protein>
<accession>Q0A7E2</accession>